<evidence type="ECO:0000255" key="1"/>
<evidence type="ECO:0000255" key="2">
    <source>
        <dbReference type="PROSITE-ProRule" id="PRU01340"/>
    </source>
</evidence>
<evidence type="ECO:0000256" key="3">
    <source>
        <dbReference type="SAM" id="MobiDB-lite"/>
    </source>
</evidence>
<evidence type="ECO:0000269" key="4">
    <source>
    </source>
</evidence>
<evidence type="ECO:0000305" key="5"/>
<name>MAV_MYCA1</name>
<gene>
    <name type="ordered locus">MAV_4644</name>
</gene>
<proteinExistence type="inferred from homology"/>
<comment type="function">
    <text>A probable mono(ADP-ribosyl)transferase, it may ADP-ribosylate Arg in target protein(s).</text>
</comment>
<comment type="catalytic activity">
    <reaction>
        <text>L-arginyl-[protein] + NAD(+) = N(omega)-(ADP-D-ribosyl)-L-arginyl-[protein] + nicotinamide + H(+)</text>
        <dbReference type="Rhea" id="RHEA:19149"/>
        <dbReference type="Rhea" id="RHEA-COMP:10532"/>
        <dbReference type="Rhea" id="RHEA-COMP:15087"/>
        <dbReference type="ChEBI" id="CHEBI:15378"/>
        <dbReference type="ChEBI" id="CHEBI:17154"/>
        <dbReference type="ChEBI" id="CHEBI:29965"/>
        <dbReference type="ChEBI" id="CHEBI:57540"/>
        <dbReference type="ChEBI" id="CHEBI:142554"/>
        <dbReference type="EC" id="2.4.2.31"/>
    </reaction>
</comment>
<comment type="subcellular location">
    <subcellularLocation>
        <location evidence="5">Secreted</location>
    </subcellularLocation>
    <text evidence="4">May be secreted by the ESX (type VII) secretion system.</text>
</comment>
<comment type="similarity">
    <text evidence="5">Belongs to the Arg-specific ADP-ribosyltransferase family.</text>
</comment>
<keyword id="KW-0328">Glycosyltransferase</keyword>
<keyword id="KW-0520">NAD</keyword>
<keyword id="KW-0521">NADP</keyword>
<keyword id="KW-0547">Nucleotide-binding</keyword>
<keyword id="KW-0548">Nucleotidyltransferase</keyword>
<keyword id="KW-0964">Secreted</keyword>
<keyword id="KW-0800">Toxin</keyword>
<keyword id="KW-0808">Transferase</keyword>
<keyword id="KW-0843">Virulence</keyword>
<feature type="chain" id="PRO_0000410946" description="Putative NAD(+)--arginine ADP-ribosyltransferase Mav">
    <location>
        <begin position="1"/>
        <end position="825"/>
    </location>
</feature>
<feature type="domain" description="TR mART core" evidence="2">
    <location>
        <begin position="650"/>
        <end position="825"/>
    </location>
</feature>
<feature type="region of interest" description="Disordered" evidence="3">
    <location>
        <begin position="435"/>
        <end position="673"/>
    </location>
</feature>
<feature type="compositionally biased region" description="Pro residues" evidence="3">
    <location>
        <begin position="443"/>
        <end position="457"/>
    </location>
</feature>
<feature type="compositionally biased region" description="Pro residues" evidence="3">
    <location>
        <begin position="468"/>
        <end position="491"/>
    </location>
</feature>
<feature type="compositionally biased region" description="Low complexity" evidence="3">
    <location>
        <begin position="560"/>
        <end position="579"/>
    </location>
</feature>
<feature type="compositionally biased region" description="Pro residues" evidence="3">
    <location>
        <begin position="580"/>
        <end position="589"/>
    </location>
</feature>
<feature type="compositionally biased region" description="Low complexity" evidence="3">
    <location>
        <begin position="590"/>
        <end position="599"/>
    </location>
</feature>
<feature type="compositionally biased region" description="Basic and acidic residues" evidence="3">
    <location>
        <begin position="656"/>
        <end position="670"/>
    </location>
</feature>
<feature type="active site" evidence="2">
    <location>
        <position position="730"/>
    </location>
</feature>
<feature type="active site" evidence="2">
    <location>
        <position position="755"/>
    </location>
</feature>
<feature type="active site" evidence="2">
    <location>
        <position position="795"/>
    </location>
</feature>
<feature type="binding site" evidence="1">
    <location>
        <begin position="687"/>
        <end position="699"/>
    </location>
    <ligand>
        <name>NAD(+)</name>
        <dbReference type="ChEBI" id="CHEBI:57540"/>
    </ligand>
</feature>
<feature type="binding site" evidence="1">
    <location>
        <begin position="730"/>
        <end position="733"/>
    </location>
    <ligand>
        <name>NAD(+)</name>
        <dbReference type="ChEBI" id="CHEBI:57540"/>
    </ligand>
</feature>
<feature type="binding site" evidence="1">
    <location>
        <position position="750"/>
    </location>
    <ligand>
        <name>NAD(+)</name>
        <dbReference type="ChEBI" id="CHEBI:57540"/>
    </ligand>
</feature>
<feature type="binding site" evidence="1">
    <location>
        <position position="795"/>
    </location>
    <ligand>
        <name>NAD(+)</name>
        <dbReference type="ChEBI" id="CHEBI:57540"/>
    </ligand>
</feature>
<sequence>MAPLACDPTALDHAGATVVAAGESLGSVISTLTAALAGTSGMAGDDPVGAALGRRYDGAAAKLIQAMADTRNGLCSIGDGVRMSAHNYAVAEAMSDLAGRASALPAPQVTGPLTVGAPPSAVGHGSGAPAGWGWVAPSIGMIWPTGDSAKLRAAAAAWATAGANFMAAETAAGGGTMAAIGAQQIPEGAAINKALADASSATADVARQCQTIAAQLNSYAAKVDQVHAAILDLLSRICDPLTGIKEVWDLLTDEDEDEIKKIADDIRTVVDNFGREADTLGGQIEATVSAVAAATENMSHWAGKEWDHFLHGTPVGRALNQVGQAFKGVGEEGWGFLKGLYEVSPNRMLLDPVGYGKTMAGMVEGAGTLVGLGPDGVPGAFDAWKALGKDVTHWDEWGSNPAEALGKSTFDVATLALPGGPLSKLGKFGHSAADALKGLKKPPGVPKPPEVKPPAAPKAPDSGQPAPSGKPGPVAPSGKPAPGPADGPLPHSPTESKPPAGGTPPAAEPPKPTAAPHSGEPKPIATPPESVGKPVTPAPAEGAPAQPHEPVSARVPPTVPAADTPAPSAPAASMSAASGPPMPPTPSLPEPASLPSGPSGDLPAETPPTAGIPHSGEPSAPSSVPPHFPDTPTHGLGDGGAHGPPESDPKNANGHGPHDASLDSGSDHHLPLHPLDSDDLAALAHYTGPGYQELNFALREGALDVSQQARVDALQKALEKLPVYEGAVVRGTNLPADVLEQYRPGEVITEAAFTSTSTDHTVAQSSAFAGNTEFRIWSTTGRDVSSVSMYPDEKEILFPAGSKFYVVSKTVDPQTGRTIIEMIER</sequence>
<dbReference type="EC" id="2.4.2.31"/>
<dbReference type="EMBL" id="CP000479">
    <property type="protein sequence ID" value="ABK66967.1"/>
    <property type="molecule type" value="Genomic_DNA"/>
</dbReference>
<dbReference type="RefSeq" id="WP_011726171.1">
    <property type="nucleotide sequence ID" value="NC_008595.1"/>
</dbReference>
<dbReference type="SMR" id="A0QLI5"/>
<dbReference type="KEGG" id="mav:MAV_4644"/>
<dbReference type="HOGENOM" id="CLU_013587_1_0_11"/>
<dbReference type="PHI-base" id="PHI:9247"/>
<dbReference type="Proteomes" id="UP000001574">
    <property type="component" value="Chromosome"/>
</dbReference>
<dbReference type="GO" id="GO:0005576">
    <property type="term" value="C:extracellular region"/>
    <property type="evidence" value="ECO:0007669"/>
    <property type="project" value="UniProtKB-SubCell"/>
</dbReference>
<dbReference type="GO" id="GO:0003950">
    <property type="term" value="F:NAD+ poly-ADP-ribosyltransferase activity"/>
    <property type="evidence" value="ECO:0007669"/>
    <property type="project" value="TreeGrafter"/>
</dbReference>
<dbReference type="GO" id="GO:0106274">
    <property type="term" value="F:NAD+-protein-arginine ADP-ribosyltransferase activity"/>
    <property type="evidence" value="ECO:0007669"/>
    <property type="project" value="UniProtKB-EC"/>
</dbReference>
<dbReference type="GO" id="GO:0000166">
    <property type="term" value="F:nucleotide binding"/>
    <property type="evidence" value="ECO:0007669"/>
    <property type="project" value="UniProtKB-KW"/>
</dbReference>
<dbReference type="GO" id="GO:0016779">
    <property type="term" value="F:nucleotidyltransferase activity"/>
    <property type="evidence" value="ECO:0007669"/>
    <property type="project" value="UniProtKB-KW"/>
</dbReference>
<dbReference type="GO" id="GO:0090729">
    <property type="term" value="F:toxin activity"/>
    <property type="evidence" value="ECO:0007669"/>
    <property type="project" value="UniProtKB-KW"/>
</dbReference>
<dbReference type="Gene3D" id="3.90.176.10">
    <property type="entry name" value="Toxin ADP-ribosyltransferase, Chain A, domain 1"/>
    <property type="match status" value="1"/>
</dbReference>
<dbReference type="InterPro" id="IPR003540">
    <property type="entry name" value="ADP-ribosyltransferase"/>
</dbReference>
<dbReference type="InterPro" id="IPR050999">
    <property type="entry name" value="ADP-ribosyltransferase_ARG"/>
</dbReference>
<dbReference type="PANTHER" id="PTHR10339">
    <property type="entry name" value="ADP-RIBOSYLTRANSFERASE"/>
    <property type="match status" value="1"/>
</dbReference>
<dbReference type="PANTHER" id="PTHR10339:SF25">
    <property type="entry name" value="SECRETED EXOENZYME S"/>
    <property type="match status" value="1"/>
</dbReference>
<dbReference type="Pfam" id="PF03496">
    <property type="entry name" value="ADPrib_exo_Tox"/>
    <property type="match status" value="1"/>
</dbReference>
<dbReference type="SUPFAM" id="SSF56399">
    <property type="entry name" value="ADP-ribosylation"/>
    <property type="match status" value="1"/>
</dbReference>
<dbReference type="PROSITE" id="PS51996">
    <property type="entry name" value="TR_MART"/>
    <property type="match status" value="1"/>
</dbReference>
<accession>A0QLI5</accession>
<protein>
    <recommendedName>
        <fullName>Putative NAD(+)--arginine ADP-ribosyltransferase Mav</fullName>
        <ecNumber>2.4.2.31</ecNumber>
    </recommendedName>
    <alternativeName>
        <fullName>Putative mono(ADP-ribosyl)transferase</fullName>
        <shortName>mADPRT</shortName>
        <shortName>mART</shortName>
    </alternativeName>
    <alternativeName>
        <fullName>Toxin Mav</fullName>
    </alternativeName>
</protein>
<reference key="1">
    <citation type="submission" date="2006-10" db="EMBL/GenBank/DDBJ databases">
        <authorList>
            <person name="Fleischmann R.D."/>
            <person name="Dodson R.J."/>
            <person name="Haft D.H."/>
            <person name="Merkel J.S."/>
            <person name="Nelson W.C."/>
            <person name="Fraser C.M."/>
        </authorList>
    </citation>
    <scope>NUCLEOTIDE SEQUENCE [LARGE SCALE GENOMIC DNA]</scope>
    <source>
        <strain>104</strain>
    </source>
</reference>
<reference key="2">
    <citation type="journal article" date="2010" name="PLoS Comput. Biol.">
        <title>Cholera- and anthrax-like toxins are among several new ADP-ribosyltransferases.</title>
        <authorList>
            <person name="Fieldhouse R.J."/>
            <person name="Turgeon Z."/>
            <person name="White D."/>
            <person name="Merrill A.R."/>
        </authorList>
    </citation>
    <scope>SUGGESTION OF FUNCTION</scope>
    <scope>SUBCELLULAR LOCATION</scope>
    <source>
        <strain>104</strain>
    </source>
</reference>
<organism>
    <name type="scientific">Mycobacterium avium (strain 104)</name>
    <dbReference type="NCBI Taxonomy" id="243243"/>
    <lineage>
        <taxon>Bacteria</taxon>
        <taxon>Bacillati</taxon>
        <taxon>Actinomycetota</taxon>
        <taxon>Actinomycetes</taxon>
        <taxon>Mycobacteriales</taxon>
        <taxon>Mycobacteriaceae</taxon>
        <taxon>Mycobacterium</taxon>
        <taxon>Mycobacterium avium complex (MAC)</taxon>
    </lineage>
</organism>